<evidence type="ECO:0000255" key="1">
    <source>
        <dbReference type="HAMAP-Rule" id="MF_00373"/>
    </source>
</evidence>
<evidence type="ECO:0000305" key="2"/>
<sequence length="62" mass="6928">MAKVCYFTGRKTVSGNNRSHAMNQTKRTVKPNLQKVTILVDGKPKKVWASARALKSGKVERI</sequence>
<protein>
    <recommendedName>
        <fullName evidence="1">Large ribosomal subunit protein bL28</fullName>
    </recommendedName>
    <alternativeName>
        <fullName evidence="2">50S ribosomal protein L28</fullName>
    </alternativeName>
</protein>
<dbReference type="EMBL" id="FM204883">
    <property type="protein sequence ID" value="CAW95165.1"/>
    <property type="molecule type" value="Genomic_DNA"/>
</dbReference>
<dbReference type="RefSeq" id="WP_002982870.1">
    <property type="nucleotide sequence ID" value="NC_012471.1"/>
</dbReference>
<dbReference type="SMR" id="C0M8K2"/>
<dbReference type="GeneID" id="83705580"/>
<dbReference type="KEGG" id="seu:SEQ_1940"/>
<dbReference type="HOGENOM" id="CLU_064548_7_1_9"/>
<dbReference type="OrthoDB" id="9805609at2"/>
<dbReference type="Proteomes" id="UP000001365">
    <property type="component" value="Chromosome"/>
</dbReference>
<dbReference type="GO" id="GO:1990904">
    <property type="term" value="C:ribonucleoprotein complex"/>
    <property type="evidence" value="ECO:0007669"/>
    <property type="project" value="UniProtKB-KW"/>
</dbReference>
<dbReference type="GO" id="GO:0005840">
    <property type="term" value="C:ribosome"/>
    <property type="evidence" value="ECO:0007669"/>
    <property type="project" value="UniProtKB-KW"/>
</dbReference>
<dbReference type="GO" id="GO:0003735">
    <property type="term" value="F:structural constituent of ribosome"/>
    <property type="evidence" value="ECO:0007669"/>
    <property type="project" value="InterPro"/>
</dbReference>
<dbReference type="GO" id="GO:0006412">
    <property type="term" value="P:translation"/>
    <property type="evidence" value="ECO:0007669"/>
    <property type="project" value="UniProtKB-UniRule"/>
</dbReference>
<dbReference type="Gene3D" id="2.30.170.40">
    <property type="entry name" value="Ribosomal protein L28/L24"/>
    <property type="match status" value="1"/>
</dbReference>
<dbReference type="HAMAP" id="MF_00373">
    <property type="entry name" value="Ribosomal_bL28"/>
    <property type="match status" value="1"/>
</dbReference>
<dbReference type="InterPro" id="IPR050096">
    <property type="entry name" value="Bacterial_rp_bL28"/>
</dbReference>
<dbReference type="InterPro" id="IPR026569">
    <property type="entry name" value="Ribosomal_bL28"/>
</dbReference>
<dbReference type="InterPro" id="IPR034704">
    <property type="entry name" value="Ribosomal_bL28/bL31-like_sf"/>
</dbReference>
<dbReference type="InterPro" id="IPR001383">
    <property type="entry name" value="Ribosomal_bL28_bact-type"/>
</dbReference>
<dbReference type="InterPro" id="IPR037147">
    <property type="entry name" value="Ribosomal_bL28_sf"/>
</dbReference>
<dbReference type="NCBIfam" id="TIGR00009">
    <property type="entry name" value="L28"/>
    <property type="match status" value="1"/>
</dbReference>
<dbReference type="PANTHER" id="PTHR39080">
    <property type="entry name" value="50S RIBOSOMAL PROTEIN L28"/>
    <property type="match status" value="1"/>
</dbReference>
<dbReference type="PANTHER" id="PTHR39080:SF1">
    <property type="entry name" value="LARGE RIBOSOMAL SUBUNIT PROTEIN BL28A"/>
    <property type="match status" value="1"/>
</dbReference>
<dbReference type="Pfam" id="PF00830">
    <property type="entry name" value="Ribosomal_L28"/>
    <property type="match status" value="1"/>
</dbReference>
<dbReference type="SUPFAM" id="SSF143800">
    <property type="entry name" value="L28p-like"/>
    <property type="match status" value="1"/>
</dbReference>
<proteinExistence type="inferred from homology"/>
<keyword id="KW-0687">Ribonucleoprotein</keyword>
<keyword id="KW-0689">Ribosomal protein</keyword>
<organism>
    <name type="scientific">Streptococcus equi subsp. equi (strain 4047)</name>
    <dbReference type="NCBI Taxonomy" id="553482"/>
    <lineage>
        <taxon>Bacteria</taxon>
        <taxon>Bacillati</taxon>
        <taxon>Bacillota</taxon>
        <taxon>Bacilli</taxon>
        <taxon>Lactobacillales</taxon>
        <taxon>Streptococcaceae</taxon>
        <taxon>Streptococcus</taxon>
    </lineage>
</organism>
<name>RL28_STRE4</name>
<comment type="similarity">
    <text evidence="1">Belongs to the bacterial ribosomal protein bL28 family.</text>
</comment>
<accession>C0M8K2</accession>
<gene>
    <name evidence="1" type="primary">rpmB</name>
    <name type="ordered locus">SEQ_1940</name>
</gene>
<reference key="1">
    <citation type="journal article" date="2009" name="PLoS Pathog.">
        <title>Genomic evidence for the evolution of Streptococcus equi: host restriction, increased virulence, and genetic exchange with human pathogens.</title>
        <authorList>
            <person name="Holden M.T.G."/>
            <person name="Heather Z."/>
            <person name="Paillot R."/>
            <person name="Steward K.F."/>
            <person name="Webb K."/>
            <person name="Ainslie F."/>
            <person name="Jourdan T."/>
            <person name="Bason N.C."/>
            <person name="Holroyd N.E."/>
            <person name="Mungall K."/>
            <person name="Quail M.A."/>
            <person name="Sanders M."/>
            <person name="Simmonds M."/>
            <person name="Willey D."/>
            <person name="Brooks K."/>
            <person name="Aanensen D.M."/>
            <person name="Spratt B.G."/>
            <person name="Jolley K.A."/>
            <person name="Maiden M.C.J."/>
            <person name="Kehoe M."/>
            <person name="Chanter N."/>
            <person name="Bentley S.D."/>
            <person name="Robinson C."/>
            <person name="Maskell D.J."/>
            <person name="Parkhill J."/>
            <person name="Waller A.S."/>
        </authorList>
    </citation>
    <scope>NUCLEOTIDE SEQUENCE [LARGE SCALE GENOMIC DNA]</scope>
    <source>
        <strain>4047</strain>
    </source>
</reference>
<feature type="chain" id="PRO_1000195940" description="Large ribosomal subunit protein bL28">
    <location>
        <begin position="1"/>
        <end position="62"/>
    </location>
</feature>